<name>FAR1_CORAP</name>
<keyword id="KW-0027">Amidation</keyword>
<keyword id="KW-0903">Direct protein sequencing</keyword>
<keyword id="KW-0527">Neuropeptide</keyword>
<keyword id="KW-0677">Repeat</keyword>
<keyword id="KW-0964">Secreted</keyword>
<keyword id="KW-0732">Signal</keyword>
<accession>Q07981</accession>
<feature type="signal peptide" evidence="1">
    <location>
        <begin position="1"/>
        <end position="19"/>
    </location>
</feature>
<feature type="peptide" id="PRO_0000009567" description="FMRFamide-like">
    <location>
        <begin position="20"/>
        <end position="36"/>
    </location>
</feature>
<feature type="peptide" id="PRO_0000009568" description="ENNNGYIRF-amide">
    <location>
        <begin position="39"/>
        <end position="47"/>
    </location>
</feature>
<feature type="peptide" id="PRO_0000009569" description="NDPFLRFGKKSDPFLRF-amide">
    <location>
        <begin position="50"/>
        <end position="66"/>
    </location>
</feature>
<feature type="peptide" id="PRO_0000009570" description="QDPFLRI-amide">
    <location>
        <begin position="69"/>
        <end position="75"/>
    </location>
</feature>
<feature type="peptide" id="PRO_0000009571" description="QDPFLRF-amide">
    <location>
        <begin position="78"/>
        <end position="84"/>
    </location>
</feature>
<feature type="peptide" id="PRO_0000009572" description="QDPFLRF-amide">
    <location>
        <begin position="87"/>
        <end position="93"/>
    </location>
</feature>
<feature type="peptide" id="PRO_0000009573" description="KQDPFLRI-amide">
    <location>
        <begin position="96"/>
        <end position="102"/>
    </location>
</feature>
<feature type="peptide" id="PRO_0000009574" description="QDPFLRF-amide">
    <location>
        <begin position="105"/>
        <end position="111"/>
    </location>
</feature>
<feature type="peptide" id="PRO_0000009575" description="SEPYLRF-amide">
    <location>
        <begin position="114"/>
        <end position="120"/>
    </location>
</feature>
<feature type="peptide" id="PRO_0000009576" description="NDPYLRF-amide">
    <location>
        <begin position="123"/>
        <end position="129"/>
    </location>
</feature>
<feature type="peptide" id="PRO_0000009577" description="NDPYLRF-amide">
    <location>
        <begin position="132"/>
        <end position="138"/>
    </location>
</feature>
<feature type="peptide" id="PRO_0000009578" description="NDPYLRF-amide">
    <location>
        <begin position="141"/>
        <end position="147"/>
    </location>
</feature>
<feature type="peptide" id="PRO_0000009579" description="NDPYLRF-amide">
    <location>
        <begin position="150"/>
        <end position="156"/>
    </location>
</feature>
<feature type="peptide" id="PRO_0000009580" description="NDPFLRF-amide">
    <location>
        <begin position="159"/>
        <end position="165"/>
    </location>
</feature>
<feature type="propeptide" id="PRO_0000009581">
    <location>
        <begin position="168"/>
        <end position="305"/>
    </location>
</feature>
<feature type="modified residue" description="Phenylalanine amide" evidence="2">
    <location>
        <position position="36"/>
    </location>
</feature>
<feature type="modified residue" description="Phenylalanine amide" evidence="2">
    <location>
        <position position="47"/>
    </location>
</feature>
<feature type="modified residue" description="Phenylalanine amide" evidence="2">
    <location>
        <position position="66"/>
    </location>
</feature>
<feature type="modified residue" description="Isoleucine amide" evidence="2">
    <location>
        <position position="75"/>
    </location>
</feature>
<feature type="modified residue" description="Phenylalanine amide" evidence="2">
    <location>
        <position position="84"/>
    </location>
</feature>
<feature type="modified residue" description="Phenylalanine amide" evidence="2">
    <location>
        <position position="93"/>
    </location>
</feature>
<feature type="modified residue" description="Isoleucine amide" evidence="2">
    <location>
        <position position="102"/>
    </location>
</feature>
<feature type="modified residue" description="Phenylalanine amide" evidence="2">
    <location>
        <position position="111"/>
    </location>
</feature>
<feature type="modified residue" description="Phenylalanine amide" evidence="2">
    <location>
        <position position="120"/>
    </location>
</feature>
<feature type="modified residue" description="Phenylalanine amide" evidence="2">
    <location>
        <position position="129"/>
    </location>
</feature>
<feature type="modified residue" description="Phenylalanine amide" evidence="2">
    <location>
        <position position="138"/>
    </location>
</feature>
<feature type="modified residue" description="Phenylalanine amide" evidence="2">
    <location>
        <position position="147"/>
    </location>
</feature>
<feature type="modified residue" description="Phenylalanine amide" evidence="2">
    <location>
        <position position="156"/>
    </location>
</feature>
<feature type="modified residue" description="Phenylalanine amide" evidence="2">
    <location>
        <position position="165"/>
    </location>
</feature>
<reference key="1">
    <citation type="journal article" date="1992" name="Mol. Cell. Neurosci.">
        <title>Structure of cDNA clones and genomic DNA FMRFamide-related peptides (FaRPs) in Helix.</title>
        <authorList>
            <person name="Lutz E.M."/>
            <person name="Macdonald M."/>
            <person name="Hettle S."/>
            <person name="Price D.A."/>
            <person name="Cottrell G.A."/>
            <person name="Sommerville J."/>
        </authorList>
    </citation>
    <scope>NUCLEOTIDE SEQUENCE [MRNA]</scope>
    <scope>AMIDATION AT PHE-36; PHE-47; PHE-66; ILE-75; PHE-84; PHE-93; ILE-102; PHE-111; PHE-120; PHE-129; PHE-138; PHE-147; PHE-156 AND PHE-165</scope>
    <source>
        <tissue>Ganglion</tissue>
    </source>
</reference>
<reference key="2">
    <citation type="journal article" date="1990" name="J. Exp. Biol.">
        <title>Seven FMRFamide-related and two SCP-related cardioactive peptides from Helix.</title>
        <authorList>
            <person name="Price D.A."/>
            <person name="Lesser W."/>
            <person name="Lee T.D."/>
            <person name="Doble K.E."/>
            <person name="Greenberg M.J."/>
        </authorList>
    </citation>
    <scope>PARTIAL PROTEIN SEQUENCE (QDPFLRF-AMIDE; NDPYLRF-AMIDE AND SEPYLRF-AMIDE)</scope>
    <source>
        <tissue>Ganglion</tissue>
    </source>
</reference>
<protein>
    <recommendedName>
        <fullName>FMRFamide-related peptides type HF-4</fullName>
    </recommendedName>
    <alternativeName>
        <fullName>HeptaFaRP</fullName>
    </alternativeName>
    <component>
        <recommendedName>
            <fullName>NDPFLRFGKKSDPFLRF-amide</fullName>
        </recommendedName>
    </component>
    <component>
        <recommendedName>
            <fullName>FMRFamide-like</fullName>
        </recommendedName>
    </component>
    <component>
        <recommendedName>
            <fullName>ENNNGYIRF-amide</fullName>
        </recommendedName>
    </component>
    <component>
        <recommendedName>
            <fullName>NDPFLRF-amide</fullName>
        </recommendedName>
    </component>
    <component>
        <recommendedName>
            <fullName>QDPFLRI-amide</fullName>
        </recommendedName>
    </component>
    <component>
        <recommendedName>
            <fullName>QDPFLRF-amide</fullName>
        </recommendedName>
    </component>
    <component>
        <recommendedName>
            <fullName>KQDPFLRI-amide</fullName>
        </recommendedName>
    </component>
    <component>
        <recommendedName>
            <fullName>SEPYLRF-amide</fullName>
        </recommendedName>
    </component>
    <component>
        <recommendedName>
            <fullName>NDPYLRF-amide</fullName>
        </recommendedName>
    </component>
</protein>
<dbReference type="EMBL" id="X73333">
    <property type="protein sequence ID" value="CAA51760.1"/>
    <property type="molecule type" value="mRNA"/>
</dbReference>
<dbReference type="PIR" id="S38817">
    <property type="entry name" value="S38817"/>
</dbReference>
<dbReference type="SMR" id="Q07981"/>
<dbReference type="GO" id="GO:0005576">
    <property type="term" value="C:extracellular region"/>
    <property type="evidence" value="ECO:0007669"/>
    <property type="project" value="UniProtKB-SubCell"/>
</dbReference>
<dbReference type="GO" id="GO:0007218">
    <property type="term" value="P:neuropeptide signaling pathway"/>
    <property type="evidence" value="ECO:0007669"/>
    <property type="project" value="UniProtKB-KW"/>
</dbReference>
<dbReference type="InterPro" id="IPR002544">
    <property type="entry name" value="FMRFamid-related_peptide-like"/>
</dbReference>
<dbReference type="InterPro" id="IPR051041">
    <property type="entry name" value="FMRFamide-related_np"/>
</dbReference>
<dbReference type="PANTHER" id="PTHR20986">
    <property type="entry name" value="FMRFAMIDE-RELATED PEPTIDES"/>
    <property type="match status" value="1"/>
</dbReference>
<dbReference type="PANTHER" id="PTHR20986:SF22">
    <property type="entry name" value="FMRFAMIDE-RELATED PEPTIDES"/>
    <property type="match status" value="1"/>
</dbReference>
<dbReference type="Pfam" id="PF01581">
    <property type="entry name" value="FARP"/>
    <property type="match status" value="6"/>
</dbReference>
<proteinExistence type="evidence at protein level"/>
<sequence>MTSLCLTIAPAVLSLICLSSYGWAEGDTTDNEYLRFGRENNNGYIRFGRNDPFLRFGKKSDPFLRFGKQDPFLRIGRQDPFLRFGKQDPFLRFGKQDPFLRIGKQDPFLRFGRSEPYLRFGRNDPYLRFGRNDPYLRFGRNDPYLRFGRNDPYLRFGKNDPFLRFGKSVDGEIEAGVDAVTLSREHEFAHENAASDRQKRSAYTDAIDKDNSLTSLVREAREASDSNGQINDGKVVEVPVFRDTRNGHYMRFGKKNEVDVTDGDTYDRDYSDSDVSNLLRYYGNTVPLPAYDKRSEHKQEYMRFG</sequence>
<comment type="function">
    <text>Can function as both cardioregulatory hormones and transmitters and may regulate cardiovascular function.</text>
</comment>
<comment type="subcellular location">
    <subcellularLocation>
        <location>Secreted</location>
    </subcellularLocation>
</comment>
<comment type="tissue specificity">
    <text>Central nervous system.</text>
</comment>
<comment type="similarity">
    <text evidence="3">Belongs to the FARP (FMRFamide related peptide) family.</text>
</comment>
<organism>
    <name type="scientific">Cornu aspersum</name>
    <name type="common">Brown garden snail</name>
    <name type="synonym">Helix aspersa</name>
    <dbReference type="NCBI Taxonomy" id="6535"/>
    <lineage>
        <taxon>Eukaryota</taxon>
        <taxon>Metazoa</taxon>
        <taxon>Spiralia</taxon>
        <taxon>Lophotrochozoa</taxon>
        <taxon>Mollusca</taxon>
        <taxon>Gastropoda</taxon>
        <taxon>Heterobranchia</taxon>
        <taxon>Euthyneura</taxon>
        <taxon>Panpulmonata</taxon>
        <taxon>Eupulmonata</taxon>
        <taxon>Stylommatophora</taxon>
        <taxon>Helicina</taxon>
        <taxon>Helicoidea</taxon>
        <taxon>Helicidae</taxon>
        <taxon>Cornu</taxon>
        <taxon>Cornu</taxon>
    </lineage>
</organism>
<evidence type="ECO:0000255" key="1"/>
<evidence type="ECO:0000269" key="2">
    <source>
    </source>
</evidence>
<evidence type="ECO:0000305" key="3"/>